<gene>
    <name type="primary">MT-CYB</name>
    <name type="synonym">COB</name>
    <name type="synonym">CYTB</name>
    <name type="synonym">MTCYB</name>
</gene>
<evidence type="ECO:0000250" key="1"/>
<evidence type="ECO:0000250" key="2">
    <source>
        <dbReference type="UniProtKB" id="P00157"/>
    </source>
</evidence>
<evidence type="ECO:0000255" key="3">
    <source>
        <dbReference type="PROSITE-ProRule" id="PRU00967"/>
    </source>
</evidence>
<evidence type="ECO:0000255" key="4">
    <source>
        <dbReference type="PROSITE-ProRule" id="PRU00968"/>
    </source>
</evidence>
<feature type="chain" id="PRO_0000061442" description="Cytochrome b">
    <location>
        <begin position="1"/>
        <end position="379"/>
    </location>
</feature>
<feature type="transmembrane region" description="Helical" evidence="2">
    <location>
        <begin position="33"/>
        <end position="53"/>
    </location>
</feature>
<feature type="transmembrane region" description="Helical" evidence="2">
    <location>
        <begin position="77"/>
        <end position="98"/>
    </location>
</feature>
<feature type="transmembrane region" description="Helical" evidence="2">
    <location>
        <begin position="113"/>
        <end position="133"/>
    </location>
</feature>
<feature type="transmembrane region" description="Helical" evidence="2">
    <location>
        <begin position="178"/>
        <end position="198"/>
    </location>
</feature>
<feature type="transmembrane region" description="Helical" evidence="2">
    <location>
        <begin position="226"/>
        <end position="246"/>
    </location>
</feature>
<feature type="transmembrane region" description="Helical" evidence="2">
    <location>
        <begin position="288"/>
        <end position="308"/>
    </location>
</feature>
<feature type="transmembrane region" description="Helical" evidence="2">
    <location>
        <begin position="320"/>
        <end position="340"/>
    </location>
</feature>
<feature type="transmembrane region" description="Helical" evidence="2">
    <location>
        <begin position="347"/>
        <end position="367"/>
    </location>
</feature>
<feature type="binding site" description="axial binding residue" evidence="2">
    <location>
        <position position="83"/>
    </location>
    <ligand>
        <name>heme b</name>
        <dbReference type="ChEBI" id="CHEBI:60344"/>
        <label>b562</label>
    </ligand>
    <ligandPart>
        <name>Fe</name>
        <dbReference type="ChEBI" id="CHEBI:18248"/>
    </ligandPart>
</feature>
<feature type="binding site" description="axial binding residue" evidence="2">
    <location>
        <position position="97"/>
    </location>
    <ligand>
        <name>heme b</name>
        <dbReference type="ChEBI" id="CHEBI:60344"/>
        <label>b566</label>
    </ligand>
    <ligandPart>
        <name>Fe</name>
        <dbReference type="ChEBI" id="CHEBI:18248"/>
    </ligandPart>
</feature>
<feature type="binding site" description="axial binding residue" evidence="2">
    <location>
        <position position="182"/>
    </location>
    <ligand>
        <name>heme b</name>
        <dbReference type="ChEBI" id="CHEBI:60344"/>
        <label>b562</label>
    </ligand>
    <ligandPart>
        <name>Fe</name>
        <dbReference type="ChEBI" id="CHEBI:18248"/>
    </ligandPart>
</feature>
<feature type="binding site" description="axial binding residue" evidence="2">
    <location>
        <position position="196"/>
    </location>
    <ligand>
        <name>heme b</name>
        <dbReference type="ChEBI" id="CHEBI:60344"/>
        <label>b566</label>
    </ligand>
    <ligandPart>
        <name>Fe</name>
        <dbReference type="ChEBI" id="CHEBI:18248"/>
    </ligandPart>
</feature>
<feature type="binding site" evidence="2">
    <location>
        <position position="201"/>
    </location>
    <ligand>
        <name>a ubiquinone</name>
        <dbReference type="ChEBI" id="CHEBI:16389"/>
    </ligand>
</feature>
<name>CYB_PRORA</name>
<sequence>MTNIRKTHPLLKIVNHSLIDLPAPSNISAWWNFGSLLGLCLVIQIFTGLFLAMHYTSDTMTAFSSATHICRDVNHGWLIRYLHANGASMFFICLYMHVGRGIYYGSYTYSETWNIGILLLFTVMATAFMGYVLPWGQMSLWGATVITNLLSAIPYIGTSLVEWIWGGFSVDKATLTRFFAFHFILPFIIAALAMVHLLFLHETGSNNPSGIPSDSDKIPFHPYYTIKDTLGFLMLTMLLLLLALFTPDLLGDPDNYSPANPLNTPPHIKPEWYFLFAYAILRSIPNKLGGVLALVMSILVLAVIPLLHTSKQRSMMFRPLSQALFWILVADLMTLTWIGGQPVEHPFITIGQVASILYFALILILMPLAGLIENKILKW</sequence>
<organism>
    <name type="scientific">Pronolagus randensis</name>
    <name type="common">Jameson's red rock hare</name>
    <dbReference type="NCBI Taxonomy" id="42060"/>
    <lineage>
        <taxon>Eukaryota</taxon>
        <taxon>Metazoa</taxon>
        <taxon>Chordata</taxon>
        <taxon>Craniata</taxon>
        <taxon>Vertebrata</taxon>
        <taxon>Euteleostomi</taxon>
        <taxon>Mammalia</taxon>
        <taxon>Eutheria</taxon>
        <taxon>Euarchontoglires</taxon>
        <taxon>Glires</taxon>
        <taxon>Lagomorpha</taxon>
        <taxon>Leporidae</taxon>
        <taxon>Pronolagus</taxon>
    </lineage>
</organism>
<keyword id="KW-0249">Electron transport</keyword>
<keyword id="KW-0349">Heme</keyword>
<keyword id="KW-0408">Iron</keyword>
<keyword id="KW-0472">Membrane</keyword>
<keyword id="KW-0479">Metal-binding</keyword>
<keyword id="KW-0496">Mitochondrion</keyword>
<keyword id="KW-0999">Mitochondrion inner membrane</keyword>
<keyword id="KW-0679">Respiratory chain</keyword>
<keyword id="KW-0812">Transmembrane</keyword>
<keyword id="KW-1133">Transmembrane helix</keyword>
<keyword id="KW-0813">Transport</keyword>
<keyword id="KW-0830">Ubiquinone</keyword>
<accession>Q6ELU7</accession>
<reference key="1">
    <citation type="journal article" date="2004" name="Syst. Biol.">
        <title>A molecular supermatrix of the rabbits and hares (Leporidae) allows for the identification of five intercontinental exchanges during the Miocene.</title>
        <authorList>
            <person name="Matthee C.A."/>
            <person name="van Vuuren B.J."/>
            <person name="Bell D."/>
            <person name="Robinson T.J."/>
        </authorList>
    </citation>
    <scope>NUCLEOTIDE SEQUENCE [GENOMIC DNA]</scope>
</reference>
<comment type="function">
    <text evidence="2">Component of the ubiquinol-cytochrome c reductase complex (complex III or cytochrome b-c1 complex) that is part of the mitochondrial respiratory chain. The b-c1 complex mediates electron transfer from ubiquinol to cytochrome c. Contributes to the generation of a proton gradient across the mitochondrial membrane that is then used for ATP synthesis.</text>
</comment>
<comment type="cofactor">
    <cofactor evidence="2">
        <name>heme b</name>
        <dbReference type="ChEBI" id="CHEBI:60344"/>
    </cofactor>
    <text evidence="2">Binds 2 heme b groups non-covalently.</text>
</comment>
<comment type="subunit">
    <text evidence="2">The cytochrome bc1 complex contains 11 subunits: 3 respiratory subunits (MT-CYB, CYC1 and UQCRFS1), 2 core proteins (UQCRC1 and UQCRC2) and 6 low-molecular weight proteins (UQCRH/QCR6, UQCRB/QCR7, UQCRQ/QCR8, UQCR10/QCR9, UQCR11/QCR10 and a cleavage product of UQCRFS1). This cytochrome bc1 complex then forms a dimer.</text>
</comment>
<comment type="subcellular location">
    <subcellularLocation>
        <location evidence="2">Mitochondrion inner membrane</location>
        <topology evidence="2">Multi-pass membrane protein</topology>
    </subcellularLocation>
</comment>
<comment type="miscellaneous">
    <text evidence="1">Heme 1 (or BL or b562) is low-potential and absorbs at about 562 nm, and heme 2 (or BH or b566) is high-potential and absorbs at about 566 nm.</text>
</comment>
<comment type="similarity">
    <text evidence="3 4">Belongs to the cytochrome b family.</text>
</comment>
<comment type="caution">
    <text evidence="2">The full-length protein contains only eight transmembrane helices, not nine as predicted by bioinformatics tools.</text>
</comment>
<proteinExistence type="inferred from homology"/>
<dbReference type="EMBL" id="AY292737">
    <property type="protein sequence ID" value="AAS54933.1"/>
    <property type="molecule type" value="Genomic_DNA"/>
</dbReference>
<dbReference type="SMR" id="Q6ELU7"/>
<dbReference type="GO" id="GO:0005743">
    <property type="term" value="C:mitochondrial inner membrane"/>
    <property type="evidence" value="ECO:0007669"/>
    <property type="project" value="UniProtKB-SubCell"/>
</dbReference>
<dbReference type="GO" id="GO:0045275">
    <property type="term" value="C:respiratory chain complex III"/>
    <property type="evidence" value="ECO:0007669"/>
    <property type="project" value="InterPro"/>
</dbReference>
<dbReference type="GO" id="GO:0046872">
    <property type="term" value="F:metal ion binding"/>
    <property type="evidence" value="ECO:0007669"/>
    <property type="project" value="UniProtKB-KW"/>
</dbReference>
<dbReference type="GO" id="GO:0008121">
    <property type="term" value="F:ubiquinol-cytochrome-c reductase activity"/>
    <property type="evidence" value="ECO:0007669"/>
    <property type="project" value="InterPro"/>
</dbReference>
<dbReference type="GO" id="GO:0006122">
    <property type="term" value="P:mitochondrial electron transport, ubiquinol to cytochrome c"/>
    <property type="evidence" value="ECO:0007669"/>
    <property type="project" value="TreeGrafter"/>
</dbReference>
<dbReference type="CDD" id="cd00290">
    <property type="entry name" value="cytochrome_b_C"/>
    <property type="match status" value="1"/>
</dbReference>
<dbReference type="CDD" id="cd00284">
    <property type="entry name" value="Cytochrome_b_N"/>
    <property type="match status" value="1"/>
</dbReference>
<dbReference type="FunFam" id="1.20.810.10:FF:000002">
    <property type="entry name" value="Cytochrome b"/>
    <property type="match status" value="1"/>
</dbReference>
<dbReference type="Gene3D" id="1.20.810.10">
    <property type="entry name" value="Cytochrome Bc1 Complex, Chain C"/>
    <property type="match status" value="1"/>
</dbReference>
<dbReference type="InterPro" id="IPR005798">
    <property type="entry name" value="Cyt_b/b6_C"/>
</dbReference>
<dbReference type="InterPro" id="IPR036150">
    <property type="entry name" value="Cyt_b/b6_C_sf"/>
</dbReference>
<dbReference type="InterPro" id="IPR005797">
    <property type="entry name" value="Cyt_b/b6_N"/>
</dbReference>
<dbReference type="InterPro" id="IPR027387">
    <property type="entry name" value="Cytb/b6-like_sf"/>
</dbReference>
<dbReference type="InterPro" id="IPR030689">
    <property type="entry name" value="Cytochrome_b"/>
</dbReference>
<dbReference type="InterPro" id="IPR048260">
    <property type="entry name" value="Cytochrome_b_C_euk/bac"/>
</dbReference>
<dbReference type="InterPro" id="IPR048259">
    <property type="entry name" value="Cytochrome_b_N_euk/bac"/>
</dbReference>
<dbReference type="InterPro" id="IPR016174">
    <property type="entry name" value="Di-haem_cyt_TM"/>
</dbReference>
<dbReference type="PANTHER" id="PTHR19271">
    <property type="entry name" value="CYTOCHROME B"/>
    <property type="match status" value="1"/>
</dbReference>
<dbReference type="PANTHER" id="PTHR19271:SF16">
    <property type="entry name" value="CYTOCHROME B"/>
    <property type="match status" value="1"/>
</dbReference>
<dbReference type="Pfam" id="PF00032">
    <property type="entry name" value="Cytochrom_B_C"/>
    <property type="match status" value="1"/>
</dbReference>
<dbReference type="Pfam" id="PF00033">
    <property type="entry name" value="Cytochrome_B"/>
    <property type="match status" value="1"/>
</dbReference>
<dbReference type="PIRSF" id="PIRSF038885">
    <property type="entry name" value="COB"/>
    <property type="match status" value="1"/>
</dbReference>
<dbReference type="SUPFAM" id="SSF81648">
    <property type="entry name" value="a domain/subunit of cytochrome bc1 complex (Ubiquinol-cytochrome c reductase)"/>
    <property type="match status" value="1"/>
</dbReference>
<dbReference type="SUPFAM" id="SSF81342">
    <property type="entry name" value="Transmembrane di-heme cytochromes"/>
    <property type="match status" value="1"/>
</dbReference>
<dbReference type="PROSITE" id="PS51003">
    <property type="entry name" value="CYTB_CTER"/>
    <property type="match status" value="1"/>
</dbReference>
<dbReference type="PROSITE" id="PS51002">
    <property type="entry name" value="CYTB_NTER"/>
    <property type="match status" value="1"/>
</dbReference>
<geneLocation type="mitochondrion"/>
<protein>
    <recommendedName>
        <fullName>Cytochrome b</fullName>
    </recommendedName>
    <alternativeName>
        <fullName>Complex III subunit 3</fullName>
    </alternativeName>
    <alternativeName>
        <fullName>Complex III subunit III</fullName>
    </alternativeName>
    <alternativeName>
        <fullName>Cytochrome b-c1 complex subunit 3</fullName>
    </alternativeName>
    <alternativeName>
        <fullName>Ubiquinol-cytochrome-c reductase complex cytochrome b subunit</fullName>
    </alternativeName>
</protein>